<evidence type="ECO:0000255" key="1">
    <source>
        <dbReference type="HAMAP-Rule" id="MF_01416"/>
    </source>
</evidence>
<proteinExistence type="inferred from homology"/>
<keyword id="KW-0066">ATP synthesis</keyword>
<keyword id="KW-0997">Cell inner membrane</keyword>
<keyword id="KW-1003">Cell membrane</keyword>
<keyword id="KW-0139">CF(1)</keyword>
<keyword id="KW-0375">Hydrogen ion transport</keyword>
<keyword id="KW-0406">Ion transport</keyword>
<keyword id="KW-0472">Membrane</keyword>
<keyword id="KW-1185">Reference proteome</keyword>
<keyword id="KW-0813">Transport</keyword>
<reference key="1">
    <citation type="journal article" date="2006" name="Proc. Natl. Acad. Sci. U.S.A.">
        <title>Evolution of sensory complexity recorded in a myxobacterial genome.</title>
        <authorList>
            <person name="Goldman B.S."/>
            <person name="Nierman W.C."/>
            <person name="Kaiser D."/>
            <person name="Slater S.C."/>
            <person name="Durkin A.S."/>
            <person name="Eisen J.A."/>
            <person name="Ronning C.M."/>
            <person name="Barbazuk W.B."/>
            <person name="Blanchard M."/>
            <person name="Field C."/>
            <person name="Halling C."/>
            <person name="Hinkle G."/>
            <person name="Iartchuk O."/>
            <person name="Kim H.S."/>
            <person name="Mackenzie C."/>
            <person name="Madupu R."/>
            <person name="Miller N."/>
            <person name="Shvartsbeyn A."/>
            <person name="Sullivan S.A."/>
            <person name="Vaudin M."/>
            <person name="Wiegand R."/>
            <person name="Kaplan H.B."/>
        </authorList>
    </citation>
    <scope>NUCLEOTIDE SEQUENCE [LARGE SCALE GENOMIC DNA]</scope>
    <source>
        <strain>DK1622</strain>
    </source>
</reference>
<protein>
    <recommendedName>
        <fullName evidence="1">ATP synthase subunit delta</fullName>
    </recommendedName>
    <alternativeName>
        <fullName evidence="1">ATP synthase F(1) sector subunit delta</fullName>
    </alternativeName>
    <alternativeName>
        <fullName evidence="1">F-type ATPase subunit delta</fullName>
        <shortName evidence="1">F-ATPase subunit delta</shortName>
    </alternativeName>
</protein>
<organism>
    <name type="scientific">Myxococcus xanthus (strain DK1622)</name>
    <dbReference type="NCBI Taxonomy" id="246197"/>
    <lineage>
        <taxon>Bacteria</taxon>
        <taxon>Pseudomonadati</taxon>
        <taxon>Myxococcota</taxon>
        <taxon>Myxococcia</taxon>
        <taxon>Myxococcales</taxon>
        <taxon>Cystobacterineae</taxon>
        <taxon>Myxococcaceae</taxon>
        <taxon>Myxococcus</taxon>
    </lineage>
</organism>
<name>ATPD_MYXXD</name>
<feature type="chain" id="PRO_0000371031" description="ATP synthase subunit delta">
    <location>
        <begin position="1"/>
        <end position="182"/>
    </location>
</feature>
<sequence>MVNVSIARRYARALLDVASEAGRTDAVAEQLTAFADVIAKNAELTDVLVNPAYTREQRLRVVESVMQAIPGGVEATLANTLRLLVDRNRLGYLADIARLFRDMADARAGRVRGHVTSAAPLPADALAQLQQTLQQLTQRNVLLETRVDPSLLGGVSAQVGSILYDGSIRTQLEEMRRELKQR</sequence>
<gene>
    <name evidence="1" type="primary">atpH</name>
    <name type="ordered locus">MXAN_7026</name>
</gene>
<accession>Q1CWT4</accession>
<dbReference type="EMBL" id="CP000113">
    <property type="protein sequence ID" value="ABF93131.1"/>
    <property type="molecule type" value="Genomic_DNA"/>
</dbReference>
<dbReference type="RefSeq" id="WP_011556945.1">
    <property type="nucleotide sequence ID" value="NC_008095.1"/>
</dbReference>
<dbReference type="SMR" id="Q1CWT4"/>
<dbReference type="STRING" id="246197.MXAN_7026"/>
<dbReference type="EnsemblBacteria" id="ABF93131">
    <property type="protein sequence ID" value="ABF93131"/>
    <property type="gene ID" value="MXAN_7026"/>
</dbReference>
<dbReference type="GeneID" id="41364202"/>
<dbReference type="KEGG" id="mxa:MXAN_7026"/>
<dbReference type="eggNOG" id="COG0712">
    <property type="taxonomic scope" value="Bacteria"/>
</dbReference>
<dbReference type="HOGENOM" id="CLU_085114_1_1_7"/>
<dbReference type="OrthoDB" id="9802471at2"/>
<dbReference type="Proteomes" id="UP000002402">
    <property type="component" value="Chromosome"/>
</dbReference>
<dbReference type="GO" id="GO:0005886">
    <property type="term" value="C:plasma membrane"/>
    <property type="evidence" value="ECO:0007669"/>
    <property type="project" value="UniProtKB-SubCell"/>
</dbReference>
<dbReference type="GO" id="GO:0045259">
    <property type="term" value="C:proton-transporting ATP synthase complex"/>
    <property type="evidence" value="ECO:0007669"/>
    <property type="project" value="UniProtKB-KW"/>
</dbReference>
<dbReference type="GO" id="GO:0046933">
    <property type="term" value="F:proton-transporting ATP synthase activity, rotational mechanism"/>
    <property type="evidence" value="ECO:0007669"/>
    <property type="project" value="UniProtKB-UniRule"/>
</dbReference>
<dbReference type="Gene3D" id="1.10.520.20">
    <property type="entry name" value="N-terminal domain of the delta subunit of the F1F0-ATP synthase"/>
    <property type="match status" value="1"/>
</dbReference>
<dbReference type="HAMAP" id="MF_01416">
    <property type="entry name" value="ATP_synth_delta_bact"/>
    <property type="match status" value="1"/>
</dbReference>
<dbReference type="InterPro" id="IPR026015">
    <property type="entry name" value="ATP_synth_OSCP/delta_N_sf"/>
</dbReference>
<dbReference type="InterPro" id="IPR000711">
    <property type="entry name" value="ATPase_OSCP/dsu"/>
</dbReference>
<dbReference type="NCBIfam" id="TIGR01145">
    <property type="entry name" value="ATP_synt_delta"/>
    <property type="match status" value="1"/>
</dbReference>
<dbReference type="PANTHER" id="PTHR11910">
    <property type="entry name" value="ATP SYNTHASE DELTA CHAIN"/>
    <property type="match status" value="1"/>
</dbReference>
<dbReference type="Pfam" id="PF00213">
    <property type="entry name" value="OSCP"/>
    <property type="match status" value="1"/>
</dbReference>
<dbReference type="PRINTS" id="PR00125">
    <property type="entry name" value="ATPASEDELTA"/>
</dbReference>
<dbReference type="SUPFAM" id="SSF47928">
    <property type="entry name" value="N-terminal domain of the delta subunit of the F1F0-ATP synthase"/>
    <property type="match status" value="1"/>
</dbReference>
<comment type="function">
    <text evidence="1">F(1)F(0) ATP synthase produces ATP from ADP in the presence of a proton or sodium gradient. F-type ATPases consist of two structural domains, F(1) containing the extramembraneous catalytic core and F(0) containing the membrane proton channel, linked together by a central stalk and a peripheral stalk. During catalysis, ATP synthesis in the catalytic domain of F(1) is coupled via a rotary mechanism of the central stalk subunits to proton translocation.</text>
</comment>
<comment type="function">
    <text evidence="1">This protein is part of the stalk that links CF(0) to CF(1). It either transmits conformational changes from CF(0) to CF(1) or is implicated in proton conduction.</text>
</comment>
<comment type="subunit">
    <text evidence="1">F-type ATPases have 2 components, F(1) - the catalytic core - and F(0) - the membrane proton channel. F(1) has five subunits: alpha(3), beta(3), gamma(1), delta(1), epsilon(1). F(0) has three main subunits: a(1), b(2) and c(10-14). The alpha and beta chains form an alternating ring which encloses part of the gamma chain. F(1) is attached to F(0) by a central stalk formed by the gamma and epsilon chains, while a peripheral stalk is formed by the delta and b chains.</text>
</comment>
<comment type="subcellular location">
    <subcellularLocation>
        <location evidence="1">Cell inner membrane</location>
        <topology evidence="1">Peripheral membrane protein</topology>
    </subcellularLocation>
</comment>
<comment type="similarity">
    <text evidence="1">Belongs to the ATPase delta chain family.</text>
</comment>